<organism>
    <name type="scientific">Buthus occitanus tunetanus</name>
    <name type="common">Common European scorpion</name>
    <name type="synonym">Buthus tunetanus</name>
    <dbReference type="NCBI Taxonomy" id="6871"/>
    <lineage>
        <taxon>Eukaryota</taxon>
        <taxon>Metazoa</taxon>
        <taxon>Ecdysozoa</taxon>
        <taxon>Arthropoda</taxon>
        <taxon>Chelicerata</taxon>
        <taxon>Arachnida</taxon>
        <taxon>Scorpiones</taxon>
        <taxon>Buthida</taxon>
        <taxon>Buthoidea</taxon>
        <taxon>Buthidae</taxon>
        <taxon>Buthus</taxon>
    </lineage>
</organism>
<comment type="function">
    <text evidence="2">Alpha toxins bind voltage-independently at site-3 of sodium channels (Nav) and inhibit the inactivation of the activated channels, thereby blocking neuronal transmission. Is active against mammals and binds with high affinity to rat brain synaptosomes.</text>
</comment>
<comment type="subcellular location">
    <subcellularLocation>
        <location evidence="3">Secreted</location>
    </subcellularLocation>
</comment>
<comment type="tissue specificity">
    <text evidence="5">Expressed by the venom gland.</text>
</comment>
<comment type="domain">
    <text evidence="4">Has the structural arrangement of an alpha-helix connected to antiparallel beta-sheets by disulfide bonds (CS-alpha/beta).</text>
</comment>
<comment type="PTM">
    <text evidence="2">When the toxin is not amidated, there are 75% loss of toxicity to mice, and total incapacity to bind rat brain synaptosomes.</text>
</comment>
<comment type="toxic dose">
    <text>LD(50) is 1.25 ug/kg (25 ng/mouse) by intracerebroventricular injection into mice.</text>
</comment>
<comment type="similarity">
    <text evidence="4">Belongs to the long (4 C-C) scorpion toxin superfamily. Sodium channel inhibitor family. Alpha subfamily.</text>
</comment>
<sequence>LVMAGVESVKDGYIVDDRNCTYFCGRNAYCNEECTKLKGESGYCQWASPYGNACYCYKVPDHVRTKGPGRCN</sequence>
<accession>P01485</accession>
<dbReference type="PIR" id="A01745">
    <property type="entry name" value="NTSR3B"/>
</dbReference>
<dbReference type="SMR" id="P01485"/>
<dbReference type="GO" id="GO:0005576">
    <property type="term" value="C:extracellular region"/>
    <property type="evidence" value="ECO:0007669"/>
    <property type="project" value="UniProtKB-SubCell"/>
</dbReference>
<dbReference type="GO" id="GO:0019871">
    <property type="term" value="F:sodium channel inhibitor activity"/>
    <property type="evidence" value="ECO:0007669"/>
    <property type="project" value="InterPro"/>
</dbReference>
<dbReference type="GO" id="GO:0090729">
    <property type="term" value="F:toxin activity"/>
    <property type="evidence" value="ECO:0007669"/>
    <property type="project" value="UniProtKB-KW"/>
</dbReference>
<dbReference type="GO" id="GO:0006952">
    <property type="term" value="P:defense response"/>
    <property type="evidence" value="ECO:0007669"/>
    <property type="project" value="InterPro"/>
</dbReference>
<dbReference type="CDD" id="cd23106">
    <property type="entry name" value="neurotoxins_LC_scorpion"/>
    <property type="match status" value="1"/>
</dbReference>
<dbReference type="Gene3D" id="3.30.30.10">
    <property type="entry name" value="Knottin, scorpion toxin-like"/>
    <property type="match status" value="1"/>
</dbReference>
<dbReference type="InterPro" id="IPR044062">
    <property type="entry name" value="LCN-type_CS_alpha_beta_dom"/>
</dbReference>
<dbReference type="InterPro" id="IPR003614">
    <property type="entry name" value="Scorpion_toxin-like"/>
</dbReference>
<dbReference type="InterPro" id="IPR036574">
    <property type="entry name" value="Scorpion_toxin-like_sf"/>
</dbReference>
<dbReference type="InterPro" id="IPR018218">
    <property type="entry name" value="Scorpion_toxinL"/>
</dbReference>
<dbReference type="InterPro" id="IPR002061">
    <property type="entry name" value="Scorpion_toxinL/defensin"/>
</dbReference>
<dbReference type="Pfam" id="PF00537">
    <property type="entry name" value="Toxin_3"/>
    <property type="match status" value="1"/>
</dbReference>
<dbReference type="PRINTS" id="PR00285">
    <property type="entry name" value="SCORPNTOXIN"/>
</dbReference>
<dbReference type="PRINTS" id="PR00284">
    <property type="entry name" value="TOXIN"/>
</dbReference>
<dbReference type="SMART" id="SM00505">
    <property type="entry name" value="Knot1"/>
    <property type="match status" value="1"/>
</dbReference>
<dbReference type="SUPFAM" id="SSF57095">
    <property type="entry name" value="Scorpion toxin-like"/>
    <property type="match status" value="1"/>
</dbReference>
<dbReference type="PROSITE" id="PS51863">
    <property type="entry name" value="LCN_CSAB"/>
    <property type="match status" value="1"/>
</dbReference>
<feature type="signal peptide" evidence="3">
    <location>
        <begin position="1" status="less than"/>
        <end position="8"/>
    </location>
</feature>
<feature type="chain" id="PRO_0000066734" description="Alpha-mammal toxin Bot3" evidence="3">
    <location>
        <begin position="9"/>
        <end position="72"/>
    </location>
</feature>
<feature type="domain" description="LCN-type CS-alpha/beta" evidence="1">
    <location>
        <begin position="10"/>
        <end position="72"/>
    </location>
</feature>
<feature type="modified residue" description="Asparagine amide" evidence="2">
    <location>
        <position position="72"/>
    </location>
</feature>
<feature type="disulfide bond" evidence="1">
    <location>
        <begin position="20"/>
        <end position="71"/>
    </location>
</feature>
<feature type="disulfide bond" evidence="1">
    <location>
        <begin position="24"/>
        <end position="44"/>
    </location>
</feature>
<feature type="disulfide bond" evidence="1">
    <location>
        <begin position="30"/>
        <end position="54"/>
    </location>
</feature>
<feature type="disulfide bond" evidence="1">
    <location>
        <begin position="34"/>
        <end position="56"/>
    </location>
</feature>
<feature type="mutagenesis site" description="No change in lethal activity to mice; when N-72 is not amidated." evidence="2">
    <original>N</original>
    <variation>H</variation>
    <location>
        <position position="72"/>
    </location>
</feature>
<feature type="mutagenesis site" description="Total loss of lethal activity, and incapacity to bind rat brain synaptosomes." evidence="2">
    <original>N</original>
    <variation>NGR</variation>
    <location>
        <position position="72"/>
    </location>
</feature>
<feature type="non-terminal residue">
    <location>
        <position position="1"/>
    </location>
</feature>
<reference key="1">
    <citation type="journal article" date="2004" name="Peptides">
        <title>Molecular cloning and functional expression of the alpha-scorpion toxin BotIII: pivotal role of the C-terminal region for its interaction with voltage-dependent sodium channels.</title>
        <authorList>
            <person name="Benkhadir K."/>
            <person name="Kharrat R."/>
            <person name="Cestele S."/>
            <person name="Mosbah A."/>
            <person name="Rochat H."/>
            <person name="el Ayeb M."/>
            <person name="Karoui H."/>
        </authorList>
    </citation>
    <scope>NUCLEOTIDE SEQUENCE [GENOMIC DNA] OF 1-66</scope>
    <scope>AMIDATION AT ASN-72</scope>
    <scope>FUNCTION</scope>
    <scope>MUTAGENESIS OF ASN-72</scope>
    <source>
        <tissue>Muscle</tissue>
    </source>
</reference>
<reference key="2">
    <citation type="journal article" date="1982" name="Toxicon">
        <title>Neurotoxins from the venoms of two scorpions: Buthus occitanus tunetanus and Buthus occitanus mardochei.</title>
        <authorList>
            <person name="Vargas O."/>
            <person name="Gregoire J."/>
            <person name="Martin M.-F."/>
            <person name="Bechis G."/>
            <person name="Rochat H."/>
        </authorList>
    </citation>
    <scope>PROTEIN SEQUENCE OF 9-72</scope>
    <scope>SUBCELLULAR LOCATION</scope>
    <source>
        <tissue>Venom</tissue>
    </source>
</reference>
<name>SCX3_BUTOC</name>
<evidence type="ECO:0000255" key="1">
    <source>
        <dbReference type="PROSITE-ProRule" id="PRU01210"/>
    </source>
</evidence>
<evidence type="ECO:0000269" key="2">
    <source>
    </source>
</evidence>
<evidence type="ECO:0000269" key="3">
    <source ref="2"/>
</evidence>
<evidence type="ECO:0000305" key="4"/>
<evidence type="ECO:0000305" key="5">
    <source ref="2"/>
</evidence>
<protein>
    <recommendedName>
        <fullName>Alpha-mammal toxin Bot3</fullName>
    </recommendedName>
    <alternativeName>
        <fullName>Bot III</fullName>
        <shortName>BotIII</shortName>
    </alternativeName>
    <alternativeName>
        <fullName>Neurotoxin III</fullName>
    </alternativeName>
</protein>
<proteinExistence type="evidence at protein level"/>
<keyword id="KW-0027">Amidation</keyword>
<keyword id="KW-0903">Direct protein sequencing</keyword>
<keyword id="KW-1015">Disulfide bond</keyword>
<keyword id="KW-0872">Ion channel impairing toxin</keyword>
<keyword id="KW-0528">Neurotoxin</keyword>
<keyword id="KW-0964">Secreted</keyword>
<keyword id="KW-0732">Signal</keyword>
<keyword id="KW-0800">Toxin</keyword>
<keyword id="KW-0738">Voltage-gated sodium channel impairing toxin</keyword>